<reference key="1">
    <citation type="submission" date="2007-02" db="EMBL/GenBank/DDBJ databases">
        <title>Complete sequence of chromosome of Yersinia pestis Pestoides F.</title>
        <authorList>
            <consortium name="US DOE Joint Genome Institute"/>
            <person name="Copeland A."/>
            <person name="Lucas S."/>
            <person name="Lapidus A."/>
            <person name="Barry K."/>
            <person name="Detter J.C."/>
            <person name="Glavina del Rio T."/>
            <person name="Hammon N."/>
            <person name="Israni S."/>
            <person name="Dalin E."/>
            <person name="Tice H."/>
            <person name="Pitluck S."/>
            <person name="Di Bartolo G."/>
            <person name="Chain P."/>
            <person name="Malfatti S."/>
            <person name="Shin M."/>
            <person name="Vergez L."/>
            <person name="Schmutz J."/>
            <person name="Larimer F."/>
            <person name="Land M."/>
            <person name="Hauser L."/>
            <person name="Worsham P."/>
            <person name="Chu M."/>
            <person name="Bearden S."/>
            <person name="Garcia E."/>
            <person name="Richardson P."/>
        </authorList>
    </citation>
    <scope>NUCLEOTIDE SEQUENCE [LARGE SCALE GENOMIC DNA]</scope>
    <source>
        <strain>Pestoides F</strain>
    </source>
</reference>
<accession>A4TLD2</accession>
<dbReference type="EMBL" id="CP000668">
    <property type="protein sequence ID" value="ABP40094.1"/>
    <property type="molecule type" value="Genomic_DNA"/>
</dbReference>
<dbReference type="RefSeq" id="WP_002209842.1">
    <property type="nucleotide sequence ID" value="NZ_CP009715.1"/>
</dbReference>
<dbReference type="SMR" id="A4TLD2"/>
<dbReference type="GeneID" id="96662409"/>
<dbReference type="KEGG" id="ypp:YPDSF_1709"/>
<dbReference type="PATRIC" id="fig|386656.14.peg.2051"/>
<dbReference type="GO" id="GO:0005886">
    <property type="term" value="C:plasma membrane"/>
    <property type="evidence" value="ECO:0007669"/>
    <property type="project" value="UniProtKB-SubCell"/>
</dbReference>
<dbReference type="GO" id="GO:0051978">
    <property type="term" value="F:lysophospholipid:sodium symporter activity"/>
    <property type="evidence" value="ECO:0007669"/>
    <property type="project" value="InterPro"/>
</dbReference>
<dbReference type="CDD" id="cd06173">
    <property type="entry name" value="MFS_MefA_like"/>
    <property type="match status" value="1"/>
</dbReference>
<dbReference type="Gene3D" id="1.20.1250.20">
    <property type="entry name" value="MFS general substrate transporter like domains"/>
    <property type="match status" value="1"/>
</dbReference>
<dbReference type="HAMAP" id="MF_01585">
    <property type="entry name" value="MFS_LplT"/>
    <property type="match status" value="1"/>
</dbReference>
<dbReference type="InterPro" id="IPR023727">
    <property type="entry name" value="LysoPLipid__transptr_LplT"/>
</dbReference>
<dbReference type="InterPro" id="IPR011701">
    <property type="entry name" value="MFS"/>
</dbReference>
<dbReference type="InterPro" id="IPR036259">
    <property type="entry name" value="MFS_trans_sf"/>
</dbReference>
<dbReference type="NCBIfam" id="NF008397">
    <property type="entry name" value="PRK11195.1"/>
    <property type="match status" value="1"/>
</dbReference>
<dbReference type="PANTHER" id="PTHR43266">
    <property type="entry name" value="MACROLIDE-EFFLUX PROTEIN"/>
    <property type="match status" value="1"/>
</dbReference>
<dbReference type="PANTHER" id="PTHR43266:SF2">
    <property type="entry name" value="MAJOR FACILITATOR SUPERFAMILY (MFS) PROFILE DOMAIN-CONTAINING PROTEIN"/>
    <property type="match status" value="1"/>
</dbReference>
<dbReference type="Pfam" id="PF07690">
    <property type="entry name" value="MFS_1"/>
    <property type="match status" value="1"/>
</dbReference>
<dbReference type="SUPFAM" id="SSF103473">
    <property type="entry name" value="MFS general substrate transporter"/>
    <property type="match status" value="1"/>
</dbReference>
<name>LPLT_YERPP</name>
<feature type="chain" id="PRO_0000309843" description="Lysophospholipid transporter LplT">
    <location>
        <begin position="1"/>
        <end position="406"/>
    </location>
</feature>
<feature type="transmembrane region" description="Helical" evidence="1">
    <location>
        <begin position="16"/>
        <end position="36"/>
    </location>
</feature>
<feature type="transmembrane region" description="Helical" evidence="1">
    <location>
        <begin position="53"/>
        <end position="73"/>
    </location>
</feature>
<feature type="transmembrane region" description="Helical" evidence="1">
    <location>
        <begin position="91"/>
        <end position="111"/>
    </location>
</feature>
<feature type="transmembrane region" description="Helical" evidence="1">
    <location>
        <begin position="139"/>
        <end position="159"/>
    </location>
</feature>
<feature type="transmembrane region" description="Helical" evidence="1">
    <location>
        <begin position="164"/>
        <end position="184"/>
    </location>
</feature>
<feature type="transmembrane region" description="Helical" evidence="1">
    <location>
        <begin position="227"/>
        <end position="247"/>
    </location>
</feature>
<feature type="transmembrane region" description="Helical" evidence="1">
    <location>
        <begin position="253"/>
        <end position="273"/>
    </location>
</feature>
<feature type="transmembrane region" description="Helical" evidence="1">
    <location>
        <begin position="285"/>
        <end position="305"/>
    </location>
</feature>
<feature type="transmembrane region" description="Helical" evidence="1">
    <location>
        <begin position="310"/>
        <end position="330"/>
    </location>
</feature>
<feature type="transmembrane region" description="Helical" evidence="1">
    <location>
        <begin position="349"/>
        <end position="369"/>
    </location>
</feature>
<feature type="transmembrane region" description="Helical" evidence="1">
    <location>
        <begin position="372"/>
        <end position="392"/>
    </location>
</feature>
<proteinExistence type="inferred from homology"/>
<sequence length="406" mass="42841">MSQDVLADKPLLSRSMVAVLCAQFFSAFGDNALLFATLALIKQQLYPDWSQPILQMAFVATYIVLAPFVGQIADGFAKGRVMMVANGLKLAGALVICFGLNPFLGYSLVGVGAAAYSPAKYGILGEITSGEQLVKANGMMEASTIAAILLGSVAGGILADWHLMAALGVCALVYAIAVIANLFIPRLAAARSGASWRPRAMTGSFFTACRLLWQDSETRFSLAGTSLFWGAGVTLRFLLVLWVPVALGIADNATPTLLNAMVAIGIVVGAGAAARFVTLKTVKRCLPAGVLIGVMVTIFSLQNSMPMAYLLLIIIGILGGFFVVPLNALLQERGKHSVGAGNAIAVQNLGENTAMLFMLGLYSLVVKLGAPVVAVGVGFGVVFALAIALLWGWQWRQQRQKTRQPE</sequence>
<keyword id="KW-0997">Cell inner membrane</keyword>
<keyword id="KW-1003">Cell membrane</keyword>
<keyword id="KW-0445">Lipid transport</keyword>
<keyword id="KW-0472">Membrane</keyword>
<keyword id="KW-0812">Transmembrane</keyword>
<keyword id="KW-1133">Transmembrane helix</keyword>
<keyword id="KW-0813">Transport</keyword>
<organism>
    <name type="scientific">Yersinia pestis (strain Pestoides F)</name>
    <dbReference type="NCBI Taxonomy" id="386656"/>
    <lineage>
        <taxon>Bacteria</taxon>
        <taxon>Pseudomonadati</taxon>
        <taxon>Pseudomonadota</taxon>
        <taxon>Gammaproteobacteria</taxon>
        <taxon>Enterobacterales</taxon>
        <taxon>Yersiniaceae</taxon>
        <taxon>Yersinia</taxon>
    </lineage>
</organism>
<evidence type="ECO:0000255" key="1">
    <source>
        <dbReference type="HAMAP-Rule" id="MF_01585"/>
    </source>
</evidence>
<gene>
    <name evidence="1" type="primary">lplT</name>
    <name type="ordered locus">YPDSF_1709</name>
</gene>
<protein>
    <recommendedName>
        <fullName evidence="1">Lysophospholipid transporter LplT</fullName>
    </recommendedName>
</protein>
<comment type="function">
    <text evidence="1">Catalyzes the facilitated diffusion of 2-acyl-glycero-3-phosphoethanolamine (2-acyl-GPE) into the cell.</text>
</comment>
<comment type="subcellular location">
    <subcellularLocation>
        <location evidence="1">Cell inner membrane</location>
        <topology evidence="1">Multi-pass membrane protein</topology>
    </subcellularLocation>
</comment>
<comment type="similarity">
    <text evidence="1">Belongs to the major facilitator superfamily. LplT (TC 2.A.1.42) family.</text>
</comment>